<gene>
    <name evidence="1" type="primary">ispE</name>
    <name type="ordered locus">VC0395_A1759</name>
    <name type="ordered locus">VC395_2296</name>
</gene>
<dbReference type="EC" id="2.7.1.148" evidence="1"/>
<dbReference type="EMBL" id="CP000627">
    <property type="protein sequence ID" value="ABQ20167.1"/>
    <property type="molecule type" value="Genomic_DNA"/>
</dbReference>
<dbReference type="EMBL" id="CP001235">
    <property type="protein sequence ID" value="ACP10288.1"/>
    <property type="status" value="ALT_INIT"/>
    <property type="molecule type" value="Genomic_DNA"/>
</dbReference>
<dbReference type="RefSeq" id="WP_000581228.1">
    <property type="nucleotide sequence ID" value="NZ_JAACZH010000001.1"/>
</dbReference>
<dbReference type="SMR" id="A5F684"/>
<dbReference type="KEGG" id="vco:VC0395_A1759"/>
<dbReference type="KEGG" id="vcr:VC395_2296"/>
<dbReference type="PATRIC" id="fig|345073.21.peg.2213"/>
<dbReference type="eggNOG" id="COG1947">
    <property type="taxonomic scope" value="Bacteria"/>
</dbReference>
<dbReference type="HOGENOM" id="CLU_053057_3_0_6"/>
<dbReference type="UniPathway" id="UPA00056">
    <property type="reaction ID" value="UER00094"/>
</dbReference>
<dbReference type="Proteomes" id="UP000000249">
    <property type="component" value="Chromosome 2"/>
</dbReference>
<dbReference type="GO" id="GO:0050515">
    <property type="term" value="F:4-(cytidine 5'-diphospho)-2-C-methyl-D-erythritol kinase activity"/>
    <property type="evidence" value="ECO:0007669"/>
    <property type="project" value="UniProtKB-UniRule"/>
</dbReference>
<dbReference type="GO" id="GO:0005524">
    <property type="term" value="F:ATP binding"/>
    <property type="evidence" value="ECO:0007669"/>
    <property type="project" value="UniProtKB-UniRule"/>
</dbReference>
<dbReference type="GO" id="GO:0019288">
    <property type="term" value="P:isopentenyl diphosphate biosynthetic process, methylerythritol 4-phosphate pathway"/>
    <property type="evidence" value="ECO:0007669"/>
    <property type="project" value="UniProtKB-UniRule"/>
</dbReference>
<dbReference type="GO" id="GO:0016114">
    <property type="term" value="P:terpenoid biosynthetic process"/>
    <property type="evidence" value="ECO:0007669"/>
    <property type="project" value="InterPro"/>
</dbReference>
<dbReference type="FunFam" id="3.30.230.10:FF:000022">
    <property type="entry name" value="4-diphosphocytidyl-2-C-methyl-D-erythritol kinase"/>
    <property type="match status" value="1"/>
</dbReference>
<dbReference type="FunFam" id="3.30.70.890:FF:000004">
    <property type="entry name" value="4-diphosphocytidyl-2-C-methyl-D-erythritol kinase"/>
    <property type="match status" value="1"/>
</dbReference>
<dbReference type="Gene3D" id="3.30.230.10">
    <property type="match status" value="1"/>
</dbReference>
<dbReference type="Gene3D" id="3.30.70.890">
    <property type="entry name" value="GHMP kinase, C-terminal domain"/>
    <property type="match status" value="1"/>
</dbReference>
<dbReference type="HAMAP" id="MF_00061">
    <property type="entry name" value="IspE"/>
    <property type="match status" value="1"/>
</dbReference>
<dbReference type="InterPro" id="IPR013750">
    <property type="entry name" value="GHMP_kinase_C_dom"/>
</dbReference>
<dbReference type="InterPro" id="IPR036554">
    <property type="entry name" value="GHMP_kinase_C_sf"/>
</dbReference>
<dbReference type="InterPro" id="IPR006204">
    <property type="entry name" value="GHMP_kinase_N_dom"/>
</dbReference>
<dbReference type="InterPro" id="IPR004424">
    <property type="entry name" value="IspE"/>
</dbReference>
<dbReference type="InterPro" id="IPR020568">
    <property type="entry name" value="Ribosomal_Su5_D2-typ_SF"/>
</dbReference>
<dbReference type="InterPro" id="IPR014721">
    <property type="entry name" value="Ribsml_uS5_D2-typ_fold_subgr"/>
</dbReference>
<dbReference type="NCBIfam" id="TIGR00154">
    <property type="entry name" value="ispE"/>
    <property type="match status" value="1"/>
</dbReference>
<dbReference type="PANTHER" id="PTHR43527">
    <property type="entry name" value="4-DIPHOSPHOCYTIDYL-2-C-METHYL-D-ERYTHRITOL KINASE, CHLOROPLASTIC"/>
    <property type="match status" value="1"/>
</dbReference>
<dbReference type="PANTHER" id="PTHR43527:SF2">
    <property type="entry name" value="4-DIPHOSPHOCYTIDYL-2-C-METHYL-D-ERYTHRITOL KINASE, CHLOROPLASTIC"/>
    <property type="match status" value="1"/>
</dbReference>
<dbReference type="Pfam" id="PF08544">
    <property type="entry name" value="GHMP_kinases_C"/>
    <property type="match status" value="1"/>
</dbReference>
<dbReference type="Pfam" id="PF00288">
    <property type="entry name" value="GHMP_kinases_N"/>
    <property type="match status" value="1"/>
</dbReference>
<dbReference type="PIRSF" id="PIRSF010376">
    <property type="entry name" value="IspE"/>
    <property type="match status" value="1"/>
</dbReference>
<dbReference type="SUPFAM" id="SSF55060">
    <property type="entry name" value="GHMP Kinase, C-terminal domain"/>
    <property type="match status" value="1"/>
</dbReference>
<dbReference type="SUPFAM" id="SSF54211">
    <property type="entry name" value="Ribosomal protein S5 domain 2-like"/>
    <property type="match status" value="1"/>
</dbReference>
<sequence length="290" mass="31488">MIHGTTVWPSPAKLNLFLYITGRRANGYHDLQTLFQFLDHGDELTITANNSGNITLSPALADVALEDNLIYKAAMALKNAAQSPLGADIQLHKVLPMGGGIGGGSSNAATTLVALNYLWQTGLSDDQLAEIGLALGADVPVFTRGFAAFAEGVGEELSAVEPEEKWYLVVRPAVSIATKDIFTHPQLMRNTPKRDLASLLTTPYENDCEKIVRSLYPEVDKQLSWLLQYAPSRLTGTGSCVFAEFSSRKDAQAVFAQLSDNVLAFVAQGRNVSPLRKTLADYQSAKIRPY</sequence>
<keyword id="KW-0067">ATP-binding</keyword>
<keyword id="KW-0414">Isoprene biosynthesis</keyword>
<keyword id="KW-0418">Kinase</keyword>
<keyword id="KW-0547">Nucleotide-binding</keyword>
<keyword id="KW-0808">Transferase</keyword>
<reference key="1">
    <citation type="submission" date="2007-03" db="EMBL/GenBank/DDBJ databases">
        <authorList>
            <person name="Heidelberg J."/>
        </authorList>
    </citation>
    <scope>NUCLEOTIDE SEQUENCE [LARGE SCALE GENOMIC DNA]</scope>
    <source>
        <strain>ATCC 39541 / Classical Ogawa 395 / O395</strain>
    </source>
</reference>
<reference key="2">
    <citation type="journal article" date="2008" name="PLoS ONE">
        <title>A recalibrated molecular clock and independent origins for the cholera pandemic clones.</title>
        <authorList>
            <person name="Feng L."/>
            <person name="Reeves P.R."/>
            <person name="Lan R."/>
            <person name="Ren Y."/>
            <person name="Gao C."/>
            <person name="Zhou Z."/>
            <person name="Ren Y."/>
            <person name="Cheng J."/>
            <person name="Wang W."/>
            <person name="Wang J."/>
            <person name="Qian W."/>
            <person name="Li D."/>
            <person name="Wang L."/>
        </authorList>
    </citation>
    <scope>NUCLEOTIDE SEQUENCE [LARGE SCALE GENOMIC DNA]</scope>
    <source>
        <strain>ATCC 39541 / Classical Ogawa 395 / O395</strain>
    </source>
</reference>
<organism>
    <name type="scientific">Vibrio cholerae serotype O1 (strain ATCC 39541 / Classical Ogawa 395 / O395)</name>
    <dbReference type="NCBI Taxonomy" id="345073"/>
    <lineage>
        <taxon>Bacteria</taxon>
        <taxon>Pseudomonadati</taxon>
        <taxon>Pseudomonadota</taxon>
        <taxon>Gammaproteobacteria</taxon>
        <taxon>Vibrionales</taxon>
        <taxon>Vibrionaceae</taxon>
        <taxon>Vibrio</taxon>
    </lineage>
</organism>
<evidence type="ECO:0000255" key="1">
    <source>
        <dbReference type="HAMAP-Rule" id="MF_00061"/>
    </source>
</evidence>
<evidence type="ECO:0000305" key="2"/>
<protein>
    <recommendedName>
        <fullName evidence="1">4-diphosphocytidyl-2-C-methyl-D-erythritol kinase</fullName>
        <shortName evidence="1">CMK</shortName>
        <ecNumber evidence="1">2.7.1.148</ecNumber>
    </recommendedName>
    <alternativeName>
        <fullName evidence="1">4-(cytidine-5'-diphospho)-2-C-methyl-D-erythritol kinase</fullName>
    </alternativeName>
</protein>
<accession>A5F684</accession>
<accession>C3M3D9</accession>
<comment type="function">
    <text evidence="1">Catalyzes the phosphorylation of the position 2 hydroxy group of 4-diphosphocytidyl-2C-methyl-D-erythritol.</text>
</comment>
<comment type="catalytic activity">
    <reaction evidence="1">
        <text>4-CDP-2-C-methyl-D-erythritol + ATP = 4-CDP-2-C-methyl-D-erythritol 2-phosphate + ADP + H(+)</text>
        <dbReference type="Rhea" id="RHEA:18437"/>
        <dbReference type="ChEBI" id="CHEBI:15378"/>
        <dbReference type="ChEBI" id="CHEBI:30616"/>
        <dbReference type="ChEBI" id="CHEBI:57823"/>
        <dbReference type="ChEBI" id="CHEBI:57919"/>
        <dbReference type="ChEBI" id="CHEBI:456216"/>
        <dbReference type="EC" id="2.7.1.148"/>
    </reaction>
</comment>
<comment type="pathway">
    <text evidence="1">Isoprenoid biosynthesis; isopentenyl diphosphate biosynthesis via DXP pathway; isopentenyl diphosphate from 1-deoxy-D-xylulose 5-phosphate: step 3/6.</text>
</comment>
<comment type="similarity">
    <text evidence="1">Belongs to the GHMP kinase family. IspE subfamily.</text>
</comment>
<comment type="sequence caution" evidence="2">
    <conflict type="erroneous initiation">
        <sequence resource="EMBL-CDS" id="ACP10288"/>
    </conflict>
</comment>
<proteinExistence type="inferred from homology"/>
<feature type="chain" id="PRO_1000092123" description="4-diphosphocytidyl-2-C-methyl-D-erythritol kinase">
    <location>
        <begin position="1"/>
        <end position="290"/>
    </location>
</feature>
<feature type="active site" evidence="1">
    <location>
        <position position="13"/>
    </location>
</feature>
<feature type="active site" evidence="1">
    <location>
        <position position="138"/>
    </location>
</feature>
<feature type="binding site" evidence="1">
    <location>
        <begin position="96"/>
        <end position="106"/>
    </location>
    <ligand>
        <name>ATP</name>
        <dbReference type="ChEBI" id="CHEBI:30616"/>
    </ligand>
</feature>
<name>ISPE_VIBC3</name>